<sequence>MPPKTSGKAAKKAGKAQKNITKTDKKKKRKRKESYAIYIYKVLKQVHPDTGISSKAMSIMNSFVNDIFERIAAEASRLAHYNKRSTITSREIQTAVRLLLPGELAKHAVSEGTKAVTKYTSSK</sequence>
<evidence type="ECO:0000250" key="1"/>
<evidence type="ECO:0000250" key="2">
    <source>
        <dbReference type="UniProtKB" id="P02283"/>
    </source>
</evidence>
<evidence type="ECO:0000256" key="3">
    <source>
        <dbReference type="SAM" id="MobiDB-lite"/>
    </source>
</evidence>
<evidence type="ECO:0000305" key="4"/>
<protein>
    <recommendedName>
        <fullName>Histone H2B</fullName>
    </recommendedName>
</protein>
<keyword id="KW-0158">Chromosome</keyword>
<keyword id="KW-0238">DNA-binding</keyword>
<keyword id="KW-0325">Glycoprotein</keyword>
<keyword id="KW-1017">Isopeptide bond</keyword>
<keyword id="KW-0488">Methylation</keyword>
<keyword id="KW-0544">Nucleosome core</keyword>
<keyword id="KW-0539">Nucleus</keyword>
<keyword id="KW-1185">Reference proteome</keyword>
<keyword id="KW-0832">Ubl conjugation</keyword>
<name>H2B_DROSI</name>
<gene>
    <name type="primary">His2B</name>
</gene>
<gene>
    <name type="ORF">GD22305</name>
</gene>
<comment type="function">
    <text>Core component of nucleosome. Nucleosomes wrap and compact DNA into chromatin, limiting DNA accessibility to the cellular machineries which require DNA as a template. Histones thereby play a central role in transcription regulation, DNA repair, DNA replication and chromosomal stability. DNA accessibility is regulated via a complex set of post-translational modifications of histones, also called histone code, and nucleosome remodeling.</text>
</comment>
<comment type="subunit">
    <text>The nucleosome is a histone octamer containing two molecules each of H2A, H2B, H3 and H4 assembled in one H3-H4 heterotetramer and two H2A-H2B heterodimers. The octamer wraps approximately 147 bp of DNA.</text>
</comment>
<comment type="subcellular location">
    <subcellularLocation>
        <location>Nucleus</location>
    </subcellularLocation>
    <subcellularLocation>
        <location>Chromosome</location>
    </subcellularLocation>
</comment>
<comment type="PTM">
    <text evidence="2">Phosphorylated by the catalytic component of the Dbf4-dependent kinase (DDK) complex Cdc7.</text>
</comment>
<comment type="PTM">
    <text evidence="2">Monoubiquitination of Lys-118 by Bre1 gives a specific tag for epigenetic transcriptional activation and is also prerequisite for histone H3 'Lys-4' and 'Lys-79' methylation (By similarity). Deubiquitination of Lys-118 by the SAGA complex is involved in activating transcription of a large subset of genes (By similarity).</text>
</comment>
<comment type="PTM">
    <text evidence="2">Methylation at Pro-2 increases upon heat shock.</text>
</comment>
<comment type="PTM">
    <text evidence="2">GlcNAcylation at Ser-110 promotes monoubiquitination of Lys-118. It fluctuates in response to extracellular glucose, and associates with transcribed genes.</text>
</comment>
<comment type="similarity">
    <text evidence="4">Belongs to the histone H2B family.</text>
</comment>
<feature type="initiator methionine" description="Removed" evidence="1">
    <location>
        <position position="1"/>
    </location>
</feature>
<feature type="chain" id="PRO_0000071864" description="Histone H2B">
    <location>
        <begin position="2"/>
        <end position="123"/>
    </location>
</feature>
<feature type="region of interest" description="Disordered" evidence="3">
    <location>
        <begin position="1"/>
        <end position="30"/>
    </location>
</feature>
<feature type="modified residue" description="N-methylproline; partial" evidence="2">
    <location>
        <position position="2"/>
    </location>
</feature>
<feature type="modified residue" description="N6-succinyllysine" evidence="2">
    <location>
        <position position="44"/>
    </location>
</feature>
<feature type="modified residue" description="N6-succinyllysine" evidence="2">
    <location>
        <position position="114"/>
    </location>
</feature>
<feature type="modified residue" description="N6-succinyllysine" evidence="2">
    <location>
        <position position="118"/>
    </location>
</feature>
<feature type="glycosylation site" description="O-linked (GlcNAc) serine" evidence="1">
    <location>
        <position position="110"/>
    </location>
</feature>
<feature type="cross-link" description="Glycyl lysine isopeptide (Lys-Gly) (interchain with G-Cter in ubiquitin)" evidence="2">
    <location>
        <position position="118"/>
    </location>
</feature>
<reference key="1">
    <citation type="journal article" date="2001" name="Genes Genet. Syst.">
        <title>Molecular evolutionary analysis of a histone gene repeating unit from Drosophila simulans.</title>
        <authorList>
            <person name="Tsunemoto K."/>
            <person name="Matsuo Y."/>
        </authorList>
    </citation>
    <scope>NUCLEOTIDE SEQUENCE [GENOMIC DNA]</scope>
    <source>
        <strain>s2</strain>
    </source>
</reference>
<reference key="2">
    <citation type="journal article" date="2007" name="Nature">
        <title>Evolution of genes and genomes on the Drosophila phylogeny.</title>
        <authorList>
            <consortium name="Drosophila 12 genomes consortium"/>
        </authorList>
    </citation>
    <scope>NUCLEOTIDE SEQUENCE [LARGE SCALE GENOMIC DNA] (GD22305)</scope>
</reference>
<organism>
    <name type="scientific">Drosophila simulans</name>
    <name type="common">Fruit fly</name>
    <dbReference type="NCBI Taxonomy" id="7240"/>
    <lineage>
        <taxon>Eukaryota</taxon>
        <taxon>Metazoa</taxon>
        <taxon>Ecdysozoa</taxon>
        <taxon>Arthropoda</taxon>
        <taxon>Hexapoda</taxon>
        <taxon>Insecta</taxon>
        <taxon>Pterygota</taxon>
        <taxon>Neoptera</taxon>
        <taxon>Endopterygota</taxon>
        <taxon>Diptera</taxon>
        <taxon>Brachycera</taxon>
        <taxon>Muscomorpha</taxon>
        <taxon>Ephydroidea</taxon>
        <taxon>Drosophilidae</taxon>
        <taxon>Drosophila</taxon>
        <taxon>Sophophora</taxon>
    </lineage>
</organism>
<dbReference type="EMBL" id="AB055959">
    <property type="protein sequence ID" value="BAC54549.1"/>
    <property type="molecule type" value="Genomic_DNA"/>
</dbReference>
<dbReference type="EMBL" id="CH985373">
    <property type="protein sequence ID" value="EDX15888.1"/>
    <property type="molecule type" value="Genomic_DNA"/>
</dbReference>
<dbReference type="EMBL" id="CH985822">
    <property type="protein sequence ID" value="EDX15915.1"/>
    <property type="molecule type" value="Genomic_DNA"/>
</dbReference>
<dbReference type="EMBL" id="CH986098">
    <property type="protein sequence ID" value="EDX15933.1"/>
    <property type="molecule type" value="Genomic_DNA"/>
</dbReference>
<dbReference type="EMBL" id="CH986106">
    <property type="protein sequence ID" value="EDX15934.1"/>
    <property type="molecule type" value="Genomic_DNA"/>
</dbReference>
<dbReference type="EMBL" id="CH987522">
    <property type="protein sequence ID" value="EDX16026.1"/>
    <property type="molecule type" value="Genomic_DNA"/>
</dbReference>
<dbReference type="EMBL" id="CH987776">
    <property type="protein sequence ID" value="EDX16044.1"/>
    <property type="molecule type" value="Genomic_DNA"/>
</dbReference>
<dbReference type="EMBL" id="CH988498">
    <property type="protein sequence ID" value="EDX16086.1"/>
    <property type="molecule type" value="Genomic_DNA"/>
</dbReference>
<dbReference type="EMBL" id="CH990050">
    <property type="protein sequence ID" value="EDX16211.1"/>
    <property type="molecule type" value="Genomic_DNA"/>
</dbReference>
<dbReference type="EMBL" id="CH990167">
    <property type="protein sequence ID" value="EDX16217.1"/>
    <property type="molecule type" value="Genomic_DNA"/>
</dbReference>
<dbReference type="EMBL" id="CH990835">
    <property type="protein sequence ID" value="EDX16241.1"/>
    <property type="molecule type" value="Genomic_DNA"/>
</dbReference>
<dbReference type="SMR" id="P59782"/>
<dbReference type="STRING" id="7240.P59782"/>
<dbReference type="GlyCosmos" id="P59782">
    <property type="glycosylation" value="1 site, No reported glycans"/>
</dbReference>
<dbReference type="EnsemblMetazoa" id="FBtr0222215">
    <property type="protein sequence ID" value="FBpp0220707"/>
    <property type="gene ID" value="FBgn0193712"/>
</dbReference>
<dbReference type="EnsemblMetazoa" id="XM_002077208.4">
    <property type="protein sequence ID" value="XP_002077244.1"/>
    <property type="gene ID" value="LOC6740385"/>
</dbReference>
<dbReference type="EnsemblMetazoa" id="XM_039296722.2">
    <property type="protein sequence ID" value="XP_039152656.1"/>
    <property type="gene ID" value="LOC120285267"/>
</dbReference>
<dbReference type="EnsemblMetazoa" id="XM_039296727.2">
    <property type="protein sequence ID" value="XP_039152661.1"/>
    <property type="gene ID" value="LOC120285268"/>
</dbReference>
<dbReference type="EnsemblMetazoa" id="XM_039296730.2">
    <property type="protein sequence ID" value="XP_039152664.1"/>
    <property type="gene ID" value="LOC120285271"/>
</dbReference>
<dbReference type="EnsemblMetazoa" id="XM_039296735.2">
    <property type="protein sequence ID" value="XP_039152669.1"/>
    <property type="gene ID" value="LOC120285275"/>
</dbReference>
<dbReference type="EnsemblMetazoa" id="XM_039296745.2">
    <property type="protein sequence ID" value="XP_039152679.1"/>
    <property type="gene ID" value="LOC120285276"/>
</dbReference>
<dbReference type="EnsemblMetazoa" id="XM_039296759.2">
    <property type="protein sequence ID" value="XP_039152693.1"/>
    <property type="gene ID" value="LOC120285279"/>
</dbReference>
<dbReference type="EnsemblMetazoa" id="XM_039298203.2">
    <property type="protein sequence ID" value="XP_039154137.1"/>
    <property type="gene ID" value="LOC120285547"/>
</dbReference>
<dbReference type="EnsemblMetazoa" id="XM_039298204.2">
    <property type="protein sequence ID" value="XP_039154138.1"/>
    <property type="gene ID" value="LOC120285548"/>
</dbReference>
<dbReference type="EnsemblMetazoa" id="XM_039298205.2">
    <property type="protein sequence ID" value="XP_039154139.1"/>
    <property type="gene ID" value="LOC120285549"/>
</dbReference>
<dbReference type="EnsemblMetazoa" id="XM_039298206.2">
    <property type="protein sequence ID" value="XP_039154140.1"/>
    <property type="gene ID" value="LOC120285550"/>
</dbReference>
<dbReference type="EnsemblMetazoa" id="XM_039298207.2">
    <property type="protein sequence ID" value="XP_039154141.1"/>
    <property type="gene ID" value="LOC27207875"/>
</dbReference>
<dbReference type="EnsemblMetazoa" id="XM_039298420.2">
    <property type="protein sequence ID" value="XP_039154354.1"/>
    <property type="gene ID" value="LOC120285804"/>
</dbReference>
<dbReference type="EnsemblMetazoa" id="XM_039298421.2">
    <property type="protein sequence ID" value="XP_039154355.1"/>
    <property type="gene ID" value="LOC120285805"/>
</dbReference>
<dbReference type="EnsemblMetazoa" id="XM_039298422.2">
    <property type="protein sequence ID" value="XP_039154356.1"/>
    <property type="gene ID" value="LOC120285806"/>
</dbReference>
<dbReference type="EnsemblMetazoa" id="XM_039298423.2">
    <property type="protein sequence ID" value="XP_039154357.1"/>
    <property type="gene ID" value="LOC120285807"/>
</dbReference>
<dbReference type="EnsemblMetazoa" id="XM_039298424.2">
    <property type="protein sequence ID" value="XP_039154358.1"/>
    <property type="gene ID" value="LOC120285808"/>
</dbReference>
<dbReference type="GeneID" id="6740385"/>
<dbReference type="HOGENOM" id="CLU_075666_2_0_1"/>
<dbReference type="OMA" id="ELAKHAX"/>
<dbReference type="OrthoDB" id="7633403at2759"/>
<dbReference type="PhylomeDB" id="P59782"/>
<dbReference type="Proteomes" id="UP000000304">
    <property type="component" value="Unassembled WGS sequence"/>
</dbReference>
<dbReference type="Bgee" id="FBgn0193712">
    <property type="expression patterns" value="Expressed in male reproductive system and 3 other cell types or tissues"/>
</dbReference>
<dbReference type="GO" id="GO:0000786">
    <property type="term" value="C:nucleosome"/>
    <property type="evidence" value="ECO:0007669"/>
    <property type="project" value="UniProtKB-KW"/>
</dbReference>
<dbReference type="GO" id="GO:0005634">
    <property type="term" value="C:nucleus"/>
    <property type="evidence" value="ECO:0007669"/>
    <property type="project" value="UniProtKB-SubCell"/>
</dbReference>
<dbReference type="GO" id="GO:0003677">
    <property type="term" value="F:DNA binding"/>
    <property type="evidence" value="ECO:0007669"/>
    <property type="project" value="UniProtKB-KW"/>
</dbReference>
<dbReference type="GO" id="GO:0046982">
    <property type="term" value="F:protein heterodimerization activity"/>
    <property type="evidence" value="ECO:0007669"/>
    <property type="project" value="InterPro"/>
</dbReference>
<dbReference type="GO" id="GO:0044877">
    <property type="term" value="F:protein-containing complex binding"/>
    <property type="evidence" value="ECO:0000250"/>
    <property type="project" value="UniProtKB"/>
</dbReference>
<dbReference type="GO" id="GO:0030527">
    <property type="term" value="F:structural constituent of chromatin"/>
    <property type="evidence" value="ECO:0007669"/>
    <property type="project" value="InterPro"/>
</dbReference>
<dbReference type="CDD" id="cd22910">
    <property type="entry name" value="HFD_H2B"/>
    <property type="match status" value="1"/>
</dbReference>
<dbReference type="FunFam" id="1.10.20.10:FF:000016">
    <property type="entry name" value="Histone H2B"/>
    <property type="match status" value="1"/>
</dbReference>
<dbReference type="Gene3D" id="1.10.20.10">
    <property type="entry name" value="Histone, subunit A"/>
    <property type="match status" value="1"/>
</dbReference>
<dbReference type="InterPro" id="IPR009072">
    <property type="entry name" value="Histone-fold"/>
</dbReference>
<dbReference type="InterPro" id="IPR007125">
    <property type="entry name" value="Histone_H2A/H2B/H3"/>
</dbReference>
<dbReference type="InterPro" id="IPR000558">
    <property type="entry name" value="Histone_H2B"/>
</dbReference>
<dbReference type="InterPro" id="IPR055333">
    <property type="entry name" value="HISTONE_H2B_site"/>
</dbReference>
<dbReference type="PANTHER" id="PTHR23428">
    <property type="entry name" value="HISTONE H2B"/>
    <property type="match status" value="1"/>
</dbReference>
<dbReference type="Pfam" id="PF00125">
    <property type="entry name" value="Histone"/>
    <property type="match status" value="1"/>
</dbReference>
<dbReference type="PRINTS" id="PR00621">
    <property type="entry name" value="HISTONEH2B"/>
</dbReference>
<dbReference type="SMART" id="SM00427">
    <property type="entry name" value="H2B"/>
    <property type="match status" value="1"/>
</dbReference>
<dbReference type="SUPFAM" id="SSF47113">
    <property type="entry name" value="Histone-fold"/>
    <property type="match status" value="1"/>
</dbReference>
<dbReference type="PROSITE" id="PS00357">
    <property type="entry name" value="HISTONE_H2B"/>
    <property type="match status" value="1"/>
</dbReference>
<proteinExistence type="inferred from homology"/>
<accession>P59782</accession>
<accession>B4NV17</accession>